<reference key="1">
    <citation type="journal article" date="1995" name="Microbiol. Immunol.">
        <title>Characterization of nontoxic-nonhemagglutinin component of the two types of progenitor toxin (M and L) produced by Clostridium botulinum type D CB-16.</title>
        <authorList>
            <person name="Ohyama T."/>
            <person name="Watanabe T."/>
            <person name="Fujinaga Y."/>
            <person name="Inoue K."/>
            <person name="Sunagawa H."/>
            <person name="Fujii N."/>
            <person name="Oguma K."/>
        </authorList>
    </citation>
    <scope>NUCLEOTIDE SEQUENCE [GENOMIC DNA]</scope>
    <scope>PROTEIN SEQUENCE OF 2-16</scope>
    <scope>SUBUNIT</scope>
    <scope>SUBCELLULAR LOCATION</scope>
    <source>
        <strain>CB-16 / Type D / phage d-16 phi</strain>
    </source>
</reference>
<reference key="2">
    <citation type="journal article" date="2002" name="J. Biol. Chem.">
        <title>In vitro reconstitution of the Clostridium botulinum type D progenitor toxin.</title>
        <authorList>
            <person name="Kouguchi H."/>
            <person name="Watanabe T."/>
            <person name="Sagane Y."/>
            <person name="Sunagawa H."/>
            <person name="Ohyama T."/>
        </authorList>
    </citation>
    <scope>NUCLEOTIDE SEQUENCE [GENOMIC DNA]</scope>
    <scope>PROTEIN SEQUENCE OF 2-11</scope>
    <scope>SUBUNIT</scope>
    <scope>SUBCELLULAR LOCATION</scope>
    <source>
        <strain>D-4947 / Type D</strain>
    </source>
</reference>
<reference key="3">
    <citation type="journal article" date="1998" name="Microbiol. Immunol.">
        <title>Molecular composition of the 16S toxin produced by a Clostridium botulinum type D strain, 1873.</title>
        <authorList>
            <person name="Nakajima H."/>
            <person name="Inoue K."/>
            <person name="Ikeda T."/>
            <person name="Fujinaga Y."/>
            <person name="Sunagawa H."/>
            <person name="Takeshi K."/>
            <person name="Ohyama T."/>
            <person name="Watanabe T."/>
            <person name="Inoue K."/>
            <person name="Oguma K."/>
        </authorList>
    </citation>
    <scope>NUCLEOTIDE SEQUENCE [GENOMIC DNA]</scope>
    <scope>PROTEIN SEQUENCE OF 2-11</scope>
    <scope>SUBUNIT</scope>
    <scope>SUBCELLULAR LOCATION</scope>
    <source>
        <strain>CB-16 / Type D</strain>
        <strain>D-1873 / Type D</strain>
    </source>
</reference>
<reference key="4">
    <citation type="submission" date="2000-02" db="EMBL/GenBank/DDBJ databases">
        <title>Characterization of the progenitor toxin components produced by Clostridium botulinum type D strain 4947.</title>
        <authorList>
            <person name="Sagane Y."/>
            <person name="Watanabe T."/>
            <person name="Kouguchi H."/>
            <person name="Yamamoto T."/>
            <person name="Takizawa J."/>
            <person name="Kawabe T."/>
            <person name="Murakami F."/>
            <person name="Muroga A."/>
            <person name="Nakatsuka M."/>
            <person name="Ohyama T."/>
        </authorList>
    </citation>
    <scope>NUCLEOTIDE SEQUENCE [GENOMIC DNA]</scope>
    <source>
        <strain>D-4947 / Type D</strain>
    </source>
</reference>
<reference evidence="9" key="5">
    <citation type="journal article" date="2007" name="J. Biol. Chem.">
        <title>A novel subunit structure of Clostridium botulinum serotype D toxin complex with three extended arms.</title>
        <authorList>
            <person name="Hasegawa K."/>
            <person name="Watanabe T."/>
            <person name="Suzuki T."/>
            <person name="Yamano A."/>
            <person name="Oikawa T."/>
            <person name="Sato Y."/>
            <person name="Kouguchi H."/>
            <person name="Yoneyama T."/>
            <person name="Niwa K."/>
            <person name="Ikeda T."/>
            <person name="Ohyama T."/>
        </authorList>
    </citation>
    <scope>X-RAY CRYSTALLOGRAPHY (1.85 ANGSTROMS) IN COMPLEX WITH HA-17</scope>
    <scope>PROTEIN SEQUENCE OF 2-6</scope>
    <scope>SUBUNIT</scope>
    <scope>SUBCELLULAR LOCATION</scope>
    <source>
        <strain>D-4947 / Type D</strain>
    </source>
</reference>
<sequence>MSQTNANDLRNNEVFFISPSNNTNKVLDKISQSEVKLWNKLSGANQKWRLIYDTNKQAYKIKVMDNTSLILTWNAPLSSVSVKTDTNGDNQYWYLLQNYISRNVIIRNYMNPNLVLQYNIDDTLMVSTQTSSSNQFFKFSNCIYEALNNRNCKLQTQLNSDRFLSKNLNSQIIVLWQWFDSSRQKWIIEYNETKSAYTLKCQENNRYLTWIQNSNNYVETYQSTDSLIQYWNINYLDNDASKYILYNLQDTNRVLDVYNSQIANGTHVIVDSYHGNTNQQWIINLI</sequence>
<gene>
    <name evidence="7" type="primary">ha-33</name>
    <name type="synonym">antP-33</name>
    <name type="synonym">ha1</name>
</gene>
<organism>
    <name type="scientific">Clostridium botulinum D phage</name>
    <name type="common">Clostridium botulinum D bacteriophage</name>
    <dbReference type="NCBI Taxonomy" id="29342"/>
    <lineage>
        <taxon>Viruses</taxon>
        <taxon>Duplodnaviria</taxon>
        <taxon>Heunggongvirae</taxon>
        <taxon>Uroviricota</taxon>
        <taxon>Caudoviricetes</taxon>
    </lineage>
</organism>
<name>HA33D_CBDP</name>
<feature type="initiator methionine" description="Removed" evidence="3 5 6">
    <location>
        <position position="1"/>
    </location>
</feature>
<feature type="chain" id="PRO_0000445709" description="Main hemagglutinin component type D">
    <location>
        <begin position="2"/>
        <end position="286"/>
    </location>
</feature>
<feature type="repeat" description="1-alpha" evidence="1">
    <location>
        <begin position="2"/>
        <end position="55"/>
    </location>
</feature>
<feature type="domain" description="Ricin B-type lectin 1" evidence="2">
    <location>
        <begin position="12"/>
        <end position="140"/>
    </location>
</feature>
<feature type="repeat" description="1-beta" evidence="1">
    <location>
        <begin position="56"/>
        <end position="100"/>
    </location>
</feature>
<feature type="repeat" description="1-gamma" evidence="1">
    <location>
        <begin position="101"/>
        <end position="148"/>
    </location>
</feature>
<feature type="repeat" description="2-alpha" evidence="1">
    <location>
        <begin position="149"/>
        <end position="193"/>
    </location>
</feature>
<feature type="domain" description="Ricin B-type lectin 2" evidence="2">
    <location>
        <begin position="180"/>
        <end position="284"/>
    </location>
</feature>
<feature type="repeat" description="2-beta" evidence="1">
    <location>
        <begin position="194"/>
        <end position="239"/>
    </location>
</feature>
<feature type="repeat" description="2-gamma" evidence="1">
    <location>
        <begin position="240"/>
        <end position="286"/>
    </location>
</feature>
<feature type="region of interest" description="Sugar-binding site 1" evidence="1">
    <location>
        <begin position="167"/>
        <end position="183"/>
    </location>
</feature>
<feature type="region of interest" description="Sugar-binding site 2" evidence="1">
    <location>
        <begin position="256"/>
        <end position="279"/>
    </location>
</feature>
<feature type="sequence variant" description="In strain: Type D / D-4947.">
    <original>K</original>
    <variation>T</variation>
    <location>
        <position position="60"/>
    </location>
</feature>
<feature type="sequence variant" description="In strain: Type D / D-4947.">
    <original>N</original>
    <variation>D</variation>
    <location>
        <position position="74"/>
    </location>
</feature>
<feature type="sequence variant" description="In strain: Type D / D-4947.">
    <original>GD</original>
    <variation>TN</variation>
    <location>
        <begin position="88"/>
        <end position="89"/>
    </location>
</feature>
<feature type="sequence variant" description="In strain: Type D / D-4947.">
    <original>N</original>
    <variation>D</variation>
    <location>
        <position position="98"/>
    </location>
</feature>
<feature type="sequence variant" description="In strain: Type D / D-4947.">
    <original>I</original>
    <variation>L</variation>
    <location>
        <position position="106"/>
    </location>
</feature>
<feature type="sequence variant" description="In strain: Type D / D-4947.">
    <original>I</original>
    <variation>T</variation>
    <location>
        <position position="120"/>
    </location>
</feature>
<feature type="sequence variant" description="In strain: Type D / D-4947.">
    <original>M</original>
    <variation>I</variation>
    <location>
        <position position="125"/>
    </location>
</feature>
<feature type="sequence variant" description="In strain: Type D / D-4947.">
    <original>S</original>
    <variation>N</variation>
    <location>
        <position position="131"/>
    </location>
</feature>
<feature type="sequence variant" description="In strain: Type D / D-4947.">
    <original>S</original>
    <variation>N</variation>
    <location>
        <position position="133"/>
    </location>
</feature>
<feature type="sequence variant" description="In strain: Type D / D-4947.">
    <original>I</original>
    <variation>T</variation>
    <location>
        <position position="187"/>
    </location>
</feature>
<feature type="sequence variant" description="In strain: Type D / D-4947.">
    <original>I</original>
    <variation>T</variation>
    <location>
        <position position="262"/>
    </location>
</feature>
<feature type="strand" evidence="10">
    <location>
        <begin position="14"/>
        <end position="19"/>
    </location>
</feature>
<feature type="strand" evidence="10">
    <location>
        <begin position="25"/>
        <end position="29"/>
    </location>
</feature>
<feature type="strand" evidence="10">
    <location>
        <begin position="31"/>
        <end position="33"/>
    </location>
</feature>
<feature type="strand" evidence="10">
    <location>
        <begin position="35"/>
        <end position="39"/>
    </location>
</feature>
<feature type="helix" evidence="10">
    <location>
        <begin position="44"/>
        <end position="46"/>
    </location>
</feature>
<feature type="strand" evidence="10">
    <location>
        <begin position="48"/>
        <end position="53"/>
    </location>
</feature>
<feature type="turn" evidence="10">
    <location>
        <begin position="54"/>
        <end position="57"/>
    </location>
</feature>
<feature type="strand" evidence="10">
    <location>
        <begin position="58"/>
        <end position="63"/>
    </location>
</feature>
<feature type="strand" evidence="10">
    <location>
        <begin position="65"/>
        <end position="67"/>
    </location>
</feature>
<feature type="strand" evidence="10">
    <location>
        <begin position="70"/>
        <end position="73"/>
    </location>
</feature>
<feature type="strand" evidence="10">
    <location>
        <begin position="77"/>
        <end position="83"/>
    </location>
</feature>
<feature type="helix" evidence="10">
    <location>
        <begin position="89"/>
        <end position="91"/>
    </location>
</feature>
<feature type="strand" evidence="10">
    <location>
        <begin position="93"/>
        <end position="98"/>
    </location>
</feature>
<feature type="turn" evidence="10">
    <location>
        <begin position="99"/>
        <end position="101"/>
    </location>
</feature>
<feature type="strand" evidence="10">
    <location>
        <begin position="104"/>
        <end position="110"/>
    </location>
</feature>
<feature type="strand" evidence="10">
    <location>
        <begin position="115"/>
        <end position="118"/>
    </location>
</feature>
<feature type="strand" evidence="10">
    <location>
        <begin position="124"/>
        <end position="127"/>
    </location>
</feature>
<feature type="helix" evidence="10">
    <location>
        <begin position="133"/>
        <end position="135"/>
    </location>
</feature>
<feature type="strand" evidence="10">
    <location>
        <begin position="137"/>
        <end position="141"/>
    </location>
</feature>
<feature type="helix" evidence="10">
    <location>
        <begin position="142"/>
        <end position="147"/>
    </location>
</feature>
<feature type="strand" evidence="10">
    <location>
        <begin position="150"/>
        <end position="156"/>
    </location>
</feature>
<feature type="strand" evidence="10">
    <location>
        <begin position="163"/>
        <end position="166"/>
    </location>
</feature>
<feature type="strand" evidence="10">
    <location>
        <begin position="170"/>
        <end position="176"/>
    </location>
</feature>
<feature type="helix" evidence="10">
    <location>
        <begin position="182"/>
        <end position="184"/>
    </location>
</feature>
<feature type="strand" evidence="10">
    <location>
        <begin position="186"/>
        <end position="191"/>
    </location>
</feature>
<feature type="turn" evidence="10">
    <location>
        <begin position="192"/>
        <end position="195"/>
    </location>
</feature>
<feature type="strand" evidence="10">
    <location>
        <begin position="196"/>
        <end position="201"/>
    </location>
</feature>
<feature type="turn" evidence="10">
    <location>
        <begin position="202"/>
        <end position="204"/>
    </location>
</feature>
<feature type="strand" evidence="10">
    <location>
        <begin position="207"/>
        <end position="210"/>
    </location>
</feature>
<feature type="strand" evidence="10">
    <location>
        <begin position="217"/>
        <end position="221"/>
    </location>
</feature>
<feature type="helix" evidence="10">
    <location>
        <begin position="227"/>
        <end position="229"/>
    </location>
</feature>
<feature type="strand" evidence="10">
    <location>
        <begin position="231"/>
        <end position="236"/>
    </location>
</feature>
<feature type="strand" evidence="10">
    <location>
        <begin position="239"/>
        <end position="247"/>
    </location>
</feature>
<feature type="strand" evidence="10">
    <location>
        <begin position="253"/>
        <end position="257"/>
    </location>
</feature>
<feature type="helix" evidence="10">
    <location>
        <begin position="258"/>
        <end position="260"/>
    </location>
</feature>
<feature type="strand" evidence="10">
    <location>
        <begin position="267"/>
        <end position="272"/>
    </location>
</feature>
<feature type="helix" evidence="10">
    <location>
        <begin position="277"/>
        <end position="279"/>
    </location>
</feature>
<feature type="strand" evidence="10">
    <location>
        <begin position="281"/>
        <end position="285"/>
    </location>
</feature>
<comment type="function">
    <text evidence="1 4">The hemagglutinin (HA) component of the progenitor toxin protects the structural integrity of the neurotoxin; may increase internalization of the neurotoxin into the bloodstream of the host. Involved in binding to the small intestine through interactions with glycolipids and glycoproteins containing sialic acid moieties (By similarity). Erythrocyte agglutination only occurs when the entire complex is assembled (PubMed:17581814). Binds eukaryotic host mucins as well as N-acetyl-beta-neuraminic acid, N-acetyl-D-galactosamine and galactose (but not glucose) via 2 sites (By similarity).</text>
</comment>
<comment type="subunit">
    <text evidence="3 4 5 6">Botulinum toxins are produced as large progenitor toxins of 12S (M toxin, about 280 kDa) and 16S (L toxin, about 650 kDa). M toxin consists of a non-toxic, non-hemagglutinin component (NTNHA) and the neurotoxin (PubMed:11713244, PubMed:17581814, PubMed:8569530). L toxin consists of the M toxin and the 3 subcomponents of hemagglutinin (HA) (PubMed:11713244, PubMed:17581814, PubMed:8569530, PubMed:9802560). HA is composed of subcomponents of 70, 33, and 17 kDa (PubMed:17581814). The stoichiometry of the whole complex has been modeled as one BoNT/D, one NTNHA, three HA-70, six HA-33 and three HA-17 (PubMed:17581814). HA-33 and HA-17 crystallize as a heterotrimer with two HA-33 and one HA-17 (PubMed:17581814).</text>
</comment>
<comment type="subcellular location">
    <subcellularLocation>
        <location evidence="3 4 5 6">Secreted</location>
    </subcellularLocation>
</comment>
<comment type="domain">
    <text evidence="1">Arranged in 2 beta-trefoil domains (called 1 and 2) each with three tandemly repeated subdomains (called alpha, beta and gamma) joined by a short alpha-helix (By similarity). Only subdomains 2-alpha and 2-gamma, in the C-terminal beta-trefoil domain, possess a functional carbohydrate-binding site (By similarity).</text>
</comment>
<comment type="miscellaneous">
    <text evidence="8">This protein can also be encoded on a prophage.</text>
</comment>
<comment type="sequence caution" evidence="8">
    <conflict type="erroneous initiation">
        <sequence resource="EMBL-CDS" id="BAA75077"/>
    </conflict>
    <text>Extended N-terminus.</text>
</comment>
<comment type="sequence caution" evidence="8">
    <conflict type="erroneous initiation">
        <sequence resource="EMBL-CDS" id="BAA75082"/>
    </conflict>
    <text>Extended N-terminus.</text>
</comment>
<keyword id="KW-0002">3D-structure</keyword>
<keyword id="KW-0903">Direct protein sequencing</keyword>
<keyword id="KW-0348">Hemagglutinin</keyword>
<keyword id="KW-0430">Lectin</keyword>
<keyword id="KW-0677">Repeat</keyword>
<keyword id="KW-0964">Secreted</keyword>
<keyword id="KW-0843">Virulence</keyword>
<protein>
    <recommendedName>
        <fullName>Main hemagglutinin component type D</fullName>
    </recommendedName>
    <alternativeName>
        <fullName evidence="7">HA 33 kDa subunit</fullName>
    </alternativeName>
    <alternativeName>
        <fullName evidence="7">HA1</fullName>
    </alternativeName>
</protein>
<evidence type="ECO:0000250" key="1">
    <source>
        <dbReference type="UniProtKB" id="P0DPR0"/>
    </source>
</evidence>
<evidence type="ECO:0000255" key="2">
    <source>
        <dbReference type="PROSITE-ProRule" id="PRU00174"/>
    </source>
</evidence>
<evidence type="ECO:0000269" key="3">
    <source>
    </source>
</evidence>
<evidence type="ECO:0000269" key="4">
    <source>
    </source>
</evidence>
<evidence type="ECO:0000269" key="5">
    <source>
    </source>
</evidence>
<evidence type="ECO:0000269" key="6">
    <source>
    </source>
</evidence>
<evidence type="ECO:0000303" key="7">
    <source>
    </source>
</evidence>
<evidence type="ECO:0000305" key="8"/>
<evidence type="ECO:0007744" key="9">
    <source>
        <dbReference type="PDB" id="2E4M"/>
    </source>
</evidence>
<evidence type="ECO:0007829" key="10">
    <source>
        <dbReference type="PDB" id="2E4M"/>
    </source>
</evidence>
<accession>P0DPR1</accession>
<accession>P46084</accession>
<accession>Q9LBR3</accession>
<accession>Q9LBS9</accession>
<accession>Q9ZWV4</accession>
<dbReference type="EMBL" id="AB012112">
    <property type="protein sequence ID" value="BAA75082.1"/>
    <property type="status" value="ALT_INIT"/>
    <property type="molecule type" value="Genomic_DNA"/>
</dbReference>
<dbReference type="EMBL" id="AB012111">
    <property type="protein sequence ID" value="BAA75077.1"/>
    <property type="status" value="ALT_INIT"/>
    <property type="molecule type" value="Genomic_DNA"/>
</dbReference>
<dbReference type="EMBL" id="AB037920">
    <property type="protein sequence ID" value="BAA90659.1"/>
    <property type="molecule type" value="Genomic_DNA"/>
</dbReference>
<dbReference type="PDB" id="2E4M">
    <property type="method" value="X-ray"/>
    <property type="resolution" value="1.85 A"/>
    <property type="chains" value="A/B=1-286"/>
</dbReference>
<dbReference type="PDBsum" id="2E4M"/>
<dbReference type="SMR" id="P0DPR1"/>
<dbReference type="EvolutionaryTrace" id="P0DPR1"/>
<dbReference type="GO" id="GO:0005576">
    <property type="term" value="C:extracellular region"/>
    <property type="evidence" value="ECO:0007669"/>
    <property type="project" value="UniProtKB-SubCell"/>
</dbReference>
<dbReference type="GO" id="GO:0030246">
    <property type="term" value="F:carbohydrate binding"/>
    <property type="evidence" value="ECO:0007669"/>
    <property type="project" value="UniProtKB-KW"/>
</dbReference>
<dbReference type="CDD" id="cd23495">
    <property type="entry name" value="beta-trefoil_Ricin_HA33_rpt1"/>
    <property type="match status" value="1"/>
</dbReference>
<dbReference type="CDD" id="cd23496">
    <property type="entry name" value="beta-trefoil_Ricin_HA33_rpt2"/>
    <property type="match status" value="1"/>
</dbReference>
<dbReference type="Gene3D" id="2.80.10.50">
    <property type="match status" value="2"/>
</dbReference>
<dbReference type="InterPro" id="IPR035992">
    <property type="entry name" value="Ricin_B-like_lectins"/>
</dbReference>
<dbReference type="InterPro" id="IPR000772">
    <property type="entry name" value="Ricin_B_lectin"/>
</dbReference>
<dbReference type="Pfam" id="PF14200">
    <property type="entry name" value="RicinB_lectin_2"/>
    <property type="match status" value="1"/>
</dbReference>
<dbReference type="SMART" id="SM00458">
    <property type="entry name" value="RICIN"/>
    <property type="match status" value="2"/>
</dbReference>
<dbReference type="SUPFAM" id="SSF50370">
    <property type="entry name" value="Ricin B-like lectins"/>
    <property type="match status" value="2"/>
</dbReference>
<dbReference type="PROSITE" id="PS50231">
    <property type="entry name" value="RICIN_B_LECTIN"/>
    <property type="match status" value="2"/>
</dbReference>
<proteinExistence type="evidence at protein level"/>
<organismHost>
    <name type="scientific">Clostridium botulinum</name>
    <dbReference type="NCBI Taxonomy" id="1491"/>
</organismHost>